<proteinExistence type="evidence at protein level"/>
<reference evidence="3" key="1">
    <citation type="journal article" date="1997" name="J. Biol. Chem.">
        <title>Differential extraction and protein sequencing reveals major differences in patterns of primary cell wall proteins from plants.</title>
        <authorList>
            <person name="Robertson D."/>
            <person name="Mitchell G.P."/>
            <person name="Gilroy J.S."/>
            <person name="Gerrish C."/>
            <person name="Bolwell G.P."/>
            <person name="Slabas A.R."/>
        </authorList>
    </citation>
    <scope>PROTEIN SEQUENCE</scope>
    <scope>SUBCELLULAR LOCATION</scope>
</reference>
<feature type="chain" id="PRO_0000079685" description="30 kDa cell wall protein">
    <location>
        <begin position="1"/>
        <end position="15" status="greater than"/>
    </location>
</feature>
<feature type="non-terminal residue" evidence="2">
    <location>
        <position position="15"/>
    </location>
</feature>
<sequence>MGQGAVEGQLFYNVQ</sequence>
<protein>
    <recommendedName>
        <fullName>30 kDa cell wall protein</fullName>
    </recommendedName>
</protein>
<keyword id="KW-0134">Cell wall</keyword>
<keyword id="KW-0903">Direct protein sequencing</keyword>
<keyword id="KW-0964">Secreted</keyword>
<organism>
    <name type="scientific">Phaseolus vulgaris</name>
    <name type="common">Kidney bean</name>
    <name type="synonym">French bean</name>
    <dbReference type="NCBI Taxonomy" id="3885"/>
    <lineage>
        <taxon>Eukaryota</taxon>
        <taxon>Viridiplantae</taxon>
        <taxon>Streptophyta</taxon>
        <taxon>Embryophyta</taxon>
        <taxon>Tracheophyta</taxon>
        <taxon>Spermatophyta</taxon>
        <taxon>Magnoliopsida</taxon>
        <taxon>eudicotyledons</taxon>
        <taxon>Gunneridae</taxon>
        <taxon>Pentapetalae</taxon>
        <taxon>rosids</taxon>
        <taxon>fabids</taxon>
        <taxon>Fabales</taxon>
        <taxon>Fabaceae</taxon>
        <taxon>Papilionoideae</taxon>
        <taxon>50 kb inversion clade</taxon>
        <taxon>NPAAA clade</taxon>
        <taxon>indigoferoid/millettioid clade</taxon>
        <taxon>Phaseoleae</taxon>
        <taxon>Phaseolus</taxon>
    </lineage>
</organism>
<accession>P80777</accession>
<evidence type="ECO:0000269" key="1">
    <source>
    </source>
</evidence>
<evidence type="ECO:0000303" key="2">
    <source>
    </source>
</evidence>
<evidence type="ECO:0000305" key="3"/>
<dbReference type="GO" id="GO:0005576">
    <property type="term" value="C:extracellular region"/>
    <property type="evidence" value="ECO:0007669"/>
    <property type="project" value="UniProtKB-KW"/>
</dbReference>
<comment type="subcellular location">
    <subcellularLocation>
        <location evidence="1">Secreted</location>
        <location evidence="1">Cell wall</location>
    </subcellularLocation>
</comment>
<name>CWP18_PHAVU</name>